<dbReference type="EC" id="2.7.7.72" evidence="1"/>
<dbReference type="EC" id="3.1.3.-" evidence="1"/>
<dbReference type="EC" id="3.1.4.-" evidence="1"/>
<dbReference type="EMBL" id="CP000826">
    <property type="protein sequence ID" value="ABV43387.1"/>
    <property type="molecule type" value="Genomic_DNA"/>
</dbReference>
<dbReference type="SMR" id="A8GJU7"/>
<dbReference type="STRING" id="399741.Spro_4293"/>
<dbReference type="KEGG" id="spe:Spro_4293"/>
<dbReference type="eggNOG" id="COG0617">
    <property type="taxonomic scope" value="Bacteria"/>
</dbReference>
<dbReference type="HOGENOM" id="CLU_015961_1_1_6"/>
<dbReference type="OrthoDB" id="9805698at2"/>
<dbReference type="GO" id="GO:0005524">
    <property type="term" value="F:ATP binding"/>
    <property type="evidence" value="ECO:0007669"/>
    <property type="project" value="UniProtKB-UniRule"/>
</dbReference>
<dbReference type="GO" id="GO:0004810">
    <property type="term" value="F:CCA tRNA nucleotidyltransferase activity"/>
    <property type="evidence" value="ECO:0007669"/>
    <property type="project" value="UniProtKB-UniRule"/>
</dbReference>
<dbReference type="GO" id="GO:0004112">
    <property type="term" value="F:cyclic-nucleotide phosphodiesterase activity"/>
    <property type="evidence" value="ECO:0007669"/>
    <property type="project" value="UniProtKB-UniRule"/>
</dbReference>
<dbReference type="GO" id="GO:0000287">
    <property type="term" value="F:magnesium ion binding"/>
    <property type="evidence" value="ECO:0007669"/>
    <property type="project" value="UniProtKB-UniRule"/>
</dbReference>
<dbReference type="GO" id="GO:0016791">
    <property type="term" value="F:phosphatase activity"/>
    <property type="evidence" value="ECO:0007669"/>
    <property type="project" value="UniProtKB-UniRule"/>
</dbReference>
<dbReference type="GO" id="GO:0000049">
    <property type="term" value="F:tRNA binding"/>
    <property type="evidence" value="ECO:0007669"/>
    <property type="project" value="UniProtKB-UniRule"/>
</dbReference>
<dbReference type="GO" id="GO:0042245">
    <property type="term" value="P:RNA repair"/>
    <property type="evidence" value="ECO:0007669"/>
    <property type="project" value="UniProtKB-KW"/>
</dbReference>
<dbReference type="GO" id="GO:0001680">
    <property type="term" value="P:tRNA 3'-terminal CCA addition"/>
    <property type="evidence" value="ECO:0007669"/>
    <property type="project" value="UniProtKB-UniRule"/>
</dbReference>
<dbReference type="CDD" id="cd00077">
    <property type="entry name" value="HDc"/>
    <property type="match status" value="1"/>
</dbReference>
<dbReference type="CDD" id="cd05398">
    <property type="entry name" value="NT_ClassII-CCAase"/>
    <property type="match status" value="1"/>
</dbReference>
<dbReference type="FunFam" id="1.10.3090.10:FF:000001">
    <property type="entry name" value="Multifunctional CCA protein"/>
    <property type="match status" value="1"/>
</dbReference>
<dbReference type="Gene3D" id="3.30.460.10">
    <property type="entry name" value="Beta Polymerase, domain 2"/>
    <property type="match status" value="1"/>
</dbReference>
<dbReference type="Gene3D" id="1.10.3090.10">
    <property type="entry name" value="cca-adding enzyme, domain 2"/>
    <property type="match status" value="1"/>
</dbReference>
<dbReference type="HAMAP" id="MF_01261">
    <property type="entry name" value="CCA_bact_type1"/>
    <property type="match status" value="1"/>
</dbReference>
<dbReference type="HAMAP" id="MF_01262">
    <property type="entry name" value="CCA_bact_type2"/>
    <property type="match status" value="1"/>
</dbReference>
<dbReference type="InterPro" id="IPR012006">
    <property type="entry name" value="CCA_bact"/>
</dbReference>
<dbReference type="InterPro" id="IPR003607">
    <property type="entry name" value="HD/PDEase_dom"/>
</dbReference>
<dbReference type="InterPro" id="IPR006674">
    <property type="entry name" value="HD_domain"/>
</dbReference>
<dbReference type="InterPro" id="IPR043519">
    <property type="entry name" value="NT_sf"/>
</dbReference>
<dbReference type="InterPro" id="IPR002646">
    <property type="entry name" value="PolA_pol_head_dom"/>
</dbReference>
<dbReference type="InterPro" id="IPR032828">
    <property type="entry name" value="PolyA_RNA-bd"/>
</dbReference>
<dbReference type="InterPro" id="IPR050124">
    <property type="entry name" value="tRNA_CCA-adding_enzyme"/>
</dbReference>
<dbReference type="NCBIfam" id="NF008137">
    <property type="entry name" value="PRK10885.1"/>
    <property type="match status" value="1"/>
</dbReference>
<dbReference type="PANTHER" id="PTHR47545">
    <property type="entry name" value="MULTIFUNCTIONAL CCA PROTEIN"/>
    <property type="match status" value="1"/>
</dbReference>
<dbReference type="PANTHER" id="PTHR47545:SF1">
    <property type="entry name" value="MULTIFUNCTIONAL CCA PROTEIN"/>
    <property type="match status" value="1"/>
</dbReference>
<dbReference type="Pfam" id="PF01966">
    <property type="entry name" value="HD"/>
    <property type="match status" value="1"/>
</dbReference>
<dbReference type="Pfam" id="PF01743">
    <property type="entry name" value="PolyA_pol"/>
    <property type="match status" value="1"/>
</dbReference>
<dbReference type="Pfam" id="PF12627">
    <property type="entry name" value="PolyA_pol_RNAbd"/>
    <property type="match status" value="1"/>
</dbReference>
<dbReference type="PIRSF" id="PIRSF000813">
    <property type="entry name" value="CCA_bact"/>
    <property type="match status" value="1"/>
</dbReference>
<dbReference type="SMART" id="SM00471">
    <property type="entry name" value="HDc"/>
    <property type="match status" value="1"/>
</dbReference>
<dbReference type="SUPFAM" id="SSF81301">
    <property type="entry name" value="Nucleotidyltransferase"/>
    <property type="match status" value="1"/>
</dbReference>
<dbReference type="SUPFAM" id="SSF81891">
    <property type="entry name" value="Poly A polymerase C-terminal region-like"/>
    <property type="match status" value="1"/>
</dbReference>
<dbReference type="PROSITE" id="PS51831">
    <property type="entry name" value="HD"/>
    <property type="match status" value="1"/>
</dbReference>
<accession>A8GJU7</accession>
<protein>
    <recommendedName>
        <fullName evidence="1">Multifunctional CCA protein</fullName>
    </recommendedName>
    <domain>
        <recommendedName>
            <fullName evidence="1">CCA-adding enzyme</fullName>
            <ecNumber evidence="1">2.7.7.72</ecNumber>
        </recommendedName>
        <alternativeName>
            <fullName evidence="1">CCA tRNA nucleotidyltransferase</fullName>
        </alternativeName>
        <alternativeName>
            <fullName evidence="1">tRNA CCA-pyrophosphorylase</fullName>
        </alternativeName>
        <alternativeName>
            <fullName evidence="1">tRNA adenylyl-/cytidylyl-transferase</fullName>
        </alternativeName>
        <alternativeName>
            <fullName evidence="1">tRNA nucleotidyltransferase</fullName>
        </alternativeName>
        <alternativeName>
            <fullName evidence="1">tRNA-NT</fullName>
        </alternativeName>
    </domain>
    <domain>
        <recommendedName>
            <fullName evidence="1">2'-nucleotidase</fullName>
            <ecNumber evidence="1">3.1.3.-</ecNumber>
        </recommendedName>
    </domain>
    <domain>
        <recommendedName>
            <fullName evidence="1">2',3'-cyclic phosphodiesterase</fullName>
            <ecNumber evidence="1">3.1.4.-</ecNumber>
        </recommendedName>
    </domain>
    <domain>
        <recommendedName>
            <fullName evidence="1">Phosphatase</fullName>
            <ecNumber evidence="1">3.1.3.-</ecNumber>
        </recommendedName>
    </domain>
</protein>
<name>CCA_SERP5</name>
<sequence>MKTYLVGGAVRDSLLEIPVVDRDWVVVGAAPSELTALGYQQVGKDFPVFLNPKTHEEYALARTERKSGQGYTGFTCYAAPDVTLEEDLQRRDLTINAIARSDDGELIDPFNGVADLQARVLRHVSDAFGEDPLRVLRVARFAARFAHLGFSIAPETAELMRQMARSGELAALTAERVWKETEKALQSQSPQVYFQVLRDCEALGVLFPEIDTLFGVPAPAKWHPEIDTGIHTLMTLAIAAQLSPEVDVRFSALCHDLGKGQTPKELWPHHHGHGPAGVLLVEALCRRLRVPNPVRDLAKLVAEYHDLIHTVNKLRPETLLKLFDAVDVWRKPQRLEQMILTSEADARGRTGFEDNPYPQGDYLRQAFQVANAVSVKEVVASGLQGLAVRDELKRRRQQALAEWKQTQDIPLDQA</sequence>
<evidence type="ECO:0000255" key="1">
    <source>
        <dbReference type="HAMAP-Rule" id="MF_01261"/>
    </source>
</evidence>
<comment type="function">
    <text evidence="1">Catalyzes the addition and repair of the essential 3'-terminal CCA sequence in tRNAs without using a nucleic acid template. Adds these three nucleotides in the order of C, C, and A to the tRNA nucleotide-73, using CTP and ATP as substrates and producing inorganic pyrophosphate. tRNA 3'-terminal CCA addition is required both for tRNA processing and repair. Also involved in tRNA surveillance by mediating tandem CCA addition to generate a CCACCA at the 3' terminus of unstable tRNAs. While stable tRNAs receive only 3'-terminal CCA, unstable tRNAs are marked with CCACCA and rapidly degraded.</text>
</comment>
<comment type="catalytic activity">
    <reaction evidence="1">
        <text>a tRNA precursor + 2 CTP + ATP = a tRNA with a 3' CCA end + 3 diphosphate</text>
        <dbReference type="Rhea" id="RHEA:14433"/>
        <dbReference type="Rhea" id="RHEA-COMP:10465"/>
        <dbReference type="Rhea" id="RHEA-COMP:10468"/>
        <dbReference type="ChEBI" id="CHEBI:30616"/>
        <dbReference type="ChEBI" id="CHEBI:33019"/>
        <dbReference type="ChEBI" id="CHEBI:37563"/>
        <dbReference type="ChEBI" id="CHEBI:74896"/>
        <dbReference type="ChEBI" id="CHEBI:83071"/>
        <dbReference type="EC" id="2.7.7.72"/>
    </reaction>
</comment>
<comment type="catalytic activity">
    <reaction evidence="1">
        <text>a tRNA with a 3' CCA end + 2 CTP + ATP = a tRNA with a 3' CCACCA end + 3 diphosphate</text>
        <dbReference type="Rhea" id="RHEA:76235"/>
        <dbReference type="Rhea" id="RHEA-COMP:10468"/>
        <dbReference type="Rhea" id="RHEA-COMP:18655"/>
        <dbReference type="ChEBI" id="CHEBI:30616"/>
        <dbReference type="ChEBI" id="CHEBI:33019"/>
        <dbReference type="ChEBI" id="CHEBI:37563"/>
        <dbReference type="ChEBI" id="CHEBI:83071"/>
        <dbReference type="ChEBI" id="CHEBI:195187"/>
    </reaction>
    <physiologicalReaction direction="left-to-right" evidence="1">
        <dbReference type="Rhea" id="RHEA:76236"/>
    </physiologicalReaction>
</comment>
<comment type="cofactor">
    <cofactor evidence="1">
        <name>Mg(2+)</name>
        <dbReference type="ChEBI" id="CHEBI:18420"/>
    </cofactor>
    <text evidence="1">Magnesium is required for nucleotidyltransferase activity.</text>
</comment>
<comment type="cofactor">
    <cofactor evidence="1">
        <name>Ni(2+)</name>
        <dbReference type="ChEBI" id="CHEBI:49786"/>
    </cofactor>
    <text evidence="1">Nickel for phosphatase activity.</text>
</comment>
<comment type="subunit">
    <text evidence="1">Monomer. Can also form homodimers and oligomers.</text>
</comment>
<comment type="domain">
    <text evidence="1">Comprises two domains: an N-terminal domain containing the nucleotidyltransferase activity and a C-terminal HD domain associated with both phosphodiesterase and phosphatase activities.</text>
</comment>
<comment type="miscellaneous">
    <text evidence="1">A single active site specifically recognizes both ATP and CTP and is responsible for their addition.</text>
</comment>
<comment type="similarity">
    <text evidence="1">Belongs to the tRNA nucleotidyltransferase/poly(A) polymerase family. Bacterial CCA-adding enzyme type 1 subfamily.</text>
</comment>
<feature type="chain" id="PRO_1000067288" description="Multifunctional CCA protein">
    <location>
        <begin position="1"/>
        <end position="414"/>
    </location>
</feature>
<feature type="domain" description="HD" evidence="1">
    <location>
        <begin position="228"/>
        <end position="329"/>
    </location>
</feature>
<feature type="binding site" evidence="1">
    <location>
        <position position="8"/>
    </location>
    <ligand>
        <name>ATP</name>
        <dbReference type="ChEBI" id="CHEBI:30616"/>
    </ligand>
</feature>
<feature type="binding site" evidence="1">
    <location>
        <position position="8"/>
    </location>
    <ligand>
        <name>CTP</name>
        <dbReference type="ChEBI" id="CHEBI:37563"/>
    </ligand>
</feature>
<feature type="binding site" evidence="1">
    <location>
        <position position="11"/>
    </location>
    <ligand>
        <name>ATP</name>
        <dbReference type="ChEBI" id="CHEBI:30616"/>
    </ligand>
</feature>
<feature type="binding site" evidence="1">
    <location>
        <position position="11"/>
    </location>
    <ligand>
        <name>CTP</name>
        <dbReference type="ChEBI" id="CHEBI:37563"/>
    </ligand>
</feature>
<feature type="binding site" evidence="1">
    <location>
        <position position="21"/>
    </location>
    <ligand>
        <name>Mg(2+)</name>
        <dbReference type="ChEBI" id="CHEBI:18420"/>
    </ligand>
</feature>
<feature type="binding site" evidence="1">
    <location>
        <position position="23"/>
    </location>
    <ligand>
        <name>Mg(2+)</name>
        <dbReference type="ChEBI" id="CHEBI:18420"/>
    </ligand>
</feature>
<feature type="binding site" evidence="1">
    <location>
        <position position="91"/>
    </location>
    <ligand>
        <name>ATP</name>
        <dbReference type="ChEBI" id="CHEBI:30616"/>
    </ligand>
</feature>
<feature type="binding site" evidence="1">
    <location>
        <position position="91"/>
    </location>
    <ligand>
        <name>CTP</name>
        <dbReference type="ChEBI" id="CHEBI:37563"/>
    </ligand>
</feature>
<feature type="binding site" evidence="1">
    <location>
        <position position="137"/>
    </location>
    <ligand>
        <name>ATP</name>
        <dbReference type="ChEBI" id="CHEBI:30616"/>
    </ligand>
</feature>
<feature type="binding site" evidence="1">
    <location>
        <position position="137"/>
    </location>
    <ligand>
        <name>CTP</name>
        <dbReference type="ChEBI" id="CHEBI:37563"/>
    </ligand>
</feature>
<feature type="binding site" evidence="1">
    <location>
        <position position="140"/>
    </location>
    <ligand>
        <name>ATP</name>
        <dbReference type="ChEBI" id="CHEBI:30616"/>
    </ligand>
</feature>
<feature type="binding site" evidence="1">
    <location>
        <position position="140"/>
    </location>
    <ligand>
        <name>CTP</name>
        <dbReference type="ChEBI" id="CHEBI:37563"/>
    </ligand>
</feature>
<gene>
    <name evidence="1" type="primary">cca</name>
    <name type="ordered locus">Spro_4293</name>
</gene>
<keyword id="KW-0067">ATP-binding</keyword>
<keyword id="KW-0378">Hydrolase</keyword>
<keyword id="KW-0460">Magnesium</keyword>
<keyword id="KW-0479">Metal-binding</keyword>
<keyword id="KW-0511">Multifunctional enzyme</keyword>
<keyword id="KW-0533">Nickel</keyword>
<keyword id="KW-0547">Nucleotide-binding</keyword>
<keyword id="KW-0548">Nucleotidyltransferase</keyword>
<keyword id="KW-0692">RNA repair</keyword>
<keyword id="KW-0694">RNA-binding</keyword>
<keyword id="KW-0808">Transferase</keyword>
<keyword id="KW-0819">tRNA processing</keyword>
<organism>
    <name type="scientific">Serratia proteamaculans (strain 568)</name>
    <dbReference type="NCBI Taxonomy" id="399741"/>
    <lineage>
        <taxon>Bacteria</taxon>
        <taxon>Pseudomonadati</taxon>
        <taxon>Pseudomonadota</taxon>
        <taxon>Gammaproteobacteria</taxon>
        <taxon>Enterobacterales</taxon>
        <taxon>Yersiniaceae</taxon>
        <taxon>Serratia</taxon>
    </lineage>
</organism>
<reference key="1">
    <citation type="submission" date="2007-09" db="EMBL/GenBank/DDBJ databases">
        <title>Complete sequence of chromosome of Serratia proteamaculans 568.</title>
        <authorList>
            <consortium name="US DOE Joint Genome Institute"/>
            <person name="Copeland A."/>
            <person name="Lucas S."/>
            <person name="Lapidus A."/>
            <person name="Barry K."/>
            <person name="Glavina del Rio T."/>
            <person name="Dalin E."/>
            <person name="Tice H."/>
            <person name="Pitluck S."/>
            <person name="Chain P."/>
            <person name="Malfatti S."/>
            <person name="Shin M."/>
            <person name="Vergez L."/>
            <person name="Schmutz J."/>
            <person name="Larimer F."/>
            <person name="Land M."/>
            <person name="Hauser L."/>
            <person name="Kyrpides N."/>
            <person name="Kim E."/>
            <person name="Taghavi S."/>
            <person name="Newman L."/>
            <person name="Vangronsveld J."/>
            <person name="van der Lelie D."/>
            <person name="Richardson P."/>
        </authorList>
    </citation>
    <scope>NUCLEOTIDE SEQUENCE [LARGE SCALE GENOMIC DNA]</scope>
    <source>
        <strain>568</strain>
    </source>
</reference>
<proteinExistence type="inferred from homology"/>